<accession>C1CF49</accession>
<proteinExistence type="inferred from homology"/>
<evidence type="ECO:0000255" key="1">
    <source>
        <dbReference type="HAMAP-Rule" id="MF_01615"/>
    </source>
</evidence>
<name>PDXT_STRZJ</name>
<feature type="chain" id="PRO_1000185905" description="Pyridoxal 5'-phosphate synthase subunit PdxT">
    <location>
        <begin position="1"/>
        <end position="193"/>
    </location>
</feature>
<feature type="active site" description="Nucleophile" evidence="1">
    <location>
        <position position="82"/>
    </location>
</feature>
<feature type="active site" description="Charge relay system" evidence="1">
    <location>
        <position position="172"/>
    </location>
</feature>
<feature type="active site" description="Charge relay system" evidence="1">
    <location>
        <position position="174"/>
    </location>
</feature>
<feature type="binding site" evidence="1">
    <location>
        <begin position="50"/>
        <end position="52"/>
    </location>
    <ligand>
        <name>L-glutamine</name>
        <dbReference type="ChEBI" id="CHEBI:58359"/>
    </ligand>
</feature>
<feature type="binding site" evidence="1">
    <location>
        <position position="109"/>
    </location>
    <ligand>
        <name>L-glutamine</name>
        <dbReference type="ChEBI" id="CHEBI:58359"/>
    </ligand>
</feature>
<feature type="binding site" evidence="1">
    <location>
        <begin position="136"/>
        <end position="137"/>
    </location>
    <ligand>
        <name>L-glutamine</name>
        <dbReference type="ChEBI" id="CHEBI:58359"/>
    </ligand>
</feature>
<sequence length="193" mass="21094">MKIGILALQGAFAEHAKVLDQLGVESVELRNLDDFQQDQSDLSGLILPGGESTTMGKLLRDQNMLLPIREAILSGLPVFGTCAGLILLAKEITSQKESHLGTMDMVVERNAYGRQLGSFYTEAECKGVGKIPMTFIRGPIISSVGEGVEILATVNNQIVAAQEKNMLVSSFHPELTDDVRLHQYFINMCKEKS</sequence>
<gene>
    <name evidence="1" type="primary">pdxT</name>
    <name type="ordered locus">SPJ_1366</name>
</gene>
<reference key="1">
    <citation type="journal article" date="2010" name="Genome Biol.">
        <title>Structure and dynamics of the pan-genome of Streptococcus pneumoniae and closely related species.</title>
        <authorList>
            <person name="Donati C."/>
            <person name="Hiller N.L."/>
            <person name="Tettelin H."/>
            <person name="Muzzi A."/>
            <person name="Croucher N.J."/>
            <person name="Angiuoli S.V."/>
            <person name="Oggioni M."/>
            <person name="Dunning Hotopp J.C."/>
            <person name="Hu F.Z."/>
            <person name="Riley D.R."/>
            <person name="Covacci A."/>
            <person name="Mitchell T.J."/>
            <person name="Bentley S.D."/>
            <person name="Kilian M."/>
            <person name="Ehrlich G.D."/>
            <person name="Rappuoli R."/>
            <person name="Moxon E.R."/>
            <person name="Masignani V."/>
        </authorList>
    </citation>
    <scope>NUCLEOTIDE SEQUENCE [LARGE SCALE GENOMIC DNA]</scope>
    <source>
        <strain>JJA</strain>
    </source>
</reference>
<dbReference type="EC" id="4.3.3.6" evidence="1"/>
<dbReference type="EC" id="3.5.1.2" evidence="1"/>
<dbReference type="EMBL" id="CP000919">
    <property type="protein sequence ID" value="ACO18942.1"/>
    <property type="molecule type" value="Genomic_DNA"/>
</dbReference>
<dbReference type="RefSeq" id="WP_000689945.1">
    <property type="nucleotide sequence ID" value="NC_012466.1"/>
</dbReference>
<dbReference type="SMR" id="C1CF49"/>
<dbReference type="MEROPS" id="C26.A32"/>
<dbReference type="GeneID" id="45653283"/>
<dbReference type="KEGG" id="sjj:SPJ_1366"/>
<dbReference type="HOGENOM" id="CLU_069674_2_0_9"/>
<dbReference type="UniPathway" id="UPA00245"/>
<dbReference type="Proteomes" id="UP000002206">
    <property type="component" value="Chromosome"/>
</dbReference>
<dbReference type="GO" id="GO:0005829">
    <property type="term" value="C:cytosol"/>
    <property type="evidence" value="ECO:0007669"/>
    <property type="project" value="TreeGrafter"/>
</dbReference>
<dbReference type="GO" id="GO:1903600">
    <property type="term" value="C:glutaminase complex"/>
    <property type="evidence" value="ECO:0007669"/>
    <property type="project" value="TreeGrafter"/>
</dbReference>
<dbReference type="GO" id="GO:0004359">
    <property type="term" value="F:glutaminase activity"/>
    <property type="evidence" value="ECO:0007669"/>
    <property type="project" value="UniProtKB-UniRule"/>
</dbReference>
<dbReference type="GO" id="GO:0036381">
    <property type="term" value="F:pyridoxal 5'-phosphate synthase (glutamine hydrolysing) activity"/>
    <property type="evidence" value="ECO:0007669"/>
    <property type="project" value="UniProtKB-UniRule"/>
</dbReference>
<dbReference type="GO" id="GO:0006543">
    <property type="term" value="P:glutamine catabolic process"/>
    <property type="evidence" value="ECO:0007669"/>
    <property type="project" value="UniProtKB-UniRule"/>
</dbReference>
<dbReference type="GO" id="GO:0042823">
    <property type="term" value="P:pyridoxal phosphate biosynthetic process"/>
    <property type="evidence" value="ECO:0007669"/>
    <property type="project" value="UniProtKB-UniRule"/>
</dbReference>
<dbReference type="GO" id="GO:0008614">
    <property type="term" value="P:pyridoxine metabolic process"/>
    <property type="evidence" value="ECO:0007669"/>
    <property type="project" value="TreeGrafter"/>
</dbReference>
<dbReference type="CDD" id="cd01749">
    <property type="entry name" value="GATase1_PB"/>
    <property type="match status" value="1"/>
</dbReference>
<dbReference type="FunFam" id="3.40.50.880:FF:000010">
    <property type="entry name" value="uncharacterized protein LOC100176842 isoform X2"/>
    <property type="match status" value="1"/>
</dbReference>
<dbReference type="Gene3D" id="3.40.50.880">
    <property type="match status" value="1"/>
</dbReference>
<dbReference type="HAMAP" id="MF_01615">
    <property type="entry name" value="PdxT"/>
    <property type="match status" value="1"/>
</dbReference>
<dbReference type="InterPro" id="IPR029062">
    <property type="entry name" value="Class_I_gatase-like"/>
</dbReference>
<dbReference type="InterPro" id="IPR002161">
    <property type="entry name" value="PdxT/SNO"/>
</dbReference>
<dbReference type="InterPro" id="IPR021196">
    <property type="entry name" value="PdxT/SNO_CS"/>
</dbReference>
<dbReference type="NCBIfam" id="TIGR03800">
    <property type="entry name" value="PLP_synth_Pdx2"/>
    <property type="match status" value="1"/>
</dbReference>
<dbReference type="PANTHER" id="PTHR31559">
    <property type="entry name" value="PYRIDOXAL 5'-PHOSPHATE SYNTHASE SUBUNIT SNO"/>
    <property type="match status" value="1"/>
</dbReference>
<dbReference type="PANTHER" id="PTHR31559:SF0">
    <property type="entry name" value="PYRIDOXAL 5'-PHOSPHATE SYNTHASE SUBUNIT SNO1-RELATED"/>
    <property type="match status" value="1"/>
</dbReference>
<dbReference type="Pfam" id="PF01174">
    <property type="entry name" value="SNO"/>
    <property type="match status" value="1"/>
</dbReference>
<dbReference type="PIRSF" id="PIRSF005639">
    <property type="entry name" value="Glut_amidoT_SNO"/>
    <property type="match status" value="1"/>
</dbReference>
<dbReference type="SUPFAM" id="SSF52317">
    <property type="entry name" value="Class I glutamine amidotransferase-like"/>
    <property type="match status" value="1"/>
</dbReference>
<dbReference type="PROSITE" id="PS01236">
    <property type="entry name" value="PDXT_SNO_1"/>
    <property type="match status" value="1"/>
</dbReference>
<dbReference type="PROSITE" id="PS51130">
    <property type="entry name" value="PDXT_SNO_2"/>
    <property type="match status" value="1"/>
</dbReference>
<comment type="function">
    <text evidence="1">Catalyzes the hydrolysis of glutamine to glutamate and ammonia as part of the biosynthesis of pyridoxal 5'-phosphate. The resulting ammonia molecule is channeled to the active site of PdxS.</text>
</comment>
<comment type="catalytic activity">
    <reaction evidence="1">
        <text>aldehydo-D-ribose 5-phosphate + D-glyceraldehyde 3-phosphate + L-glutamine = pyridoxal 5'-phosphate + L-glutamate + phosphate + 3 H2O + H(+)</text>
        <dbReference type="Rhea" id="RHEA:31507"/>
        <dbReference type="ChEBI" id="CHEBI:15377"/>
        <dbReference type="ChEBI" id="CHEBI:15378"/>
        <dbReference type="ChEBI" id="CHEBI:29985"/>
        <dbReference type="ChEBI" id="CHEBI:43474"/>
        <dbReference type="ChEBI" id="CHEBI:58273"/>
        <dbReference type="ChEBI" id="CHEBI:58359"/>
        <dbReference type="ChEBI" id="CHEBI:59776"/>
        <dbReference type="ChEBI" id="CHEBI:597326"/>
        <dbReference type="EC" id="4.3.3.6"/>
    </reaction>
</comment>
<comment type="catalytic activity">
    <reaction evidence="1">
        <text>L-glutamine + H2O = L-glutamate + NH4(+)</text>
        <dbReference type="Rhea" id="RHEA:15889"/>
        <dbReference type="ChEBI" id="CHEBI:15377"/>
        <dbReference type="ChEBI" id="CHEBI:28938"/>
        <dbReference type="ChEBI" id="CHEBI:29985"/>
        <dbReference type="ChEBI" id="CHEBI:58359"/>
        <dbReference type="EC" id="3.5.1.2"/>
    </reaction>
</comment>
<comment type="pathway">
    <text evidence="1">Cofactor biosynthesis; pyridoxal 5'-phosphate biosynthesis.</text>
</comment>
<comment type="subunit">
    <text evidence="1">In the presence of PdxS, forms a dodecamer of heterodimers. Only shows activity in the heterodimer.</text>
</comment>
<comment type="similarity">
    <text evidence="1">Belongs to the glutaminase PdxT/SNO family.</text>
</comment>
<organism>
    <name type="scientific">Streptococcus pneumoniae (strain JJA)</name>
    <dbReference type="NCBI Taxonomy" id="488222"/>
    <lineage>
        <taxon>Bacteria</taxon>
        <taxon>Bacillati</taxon>
        <taxon>Bacillota</taxon>
        <taxon>Bacilli</taxon>
        <taxon>Lactobacillales</taxon>
        <taxon>Streptococcaceae</taxon>
        <taxon>Streptococcus</taxon>
    </lineage>
</organism>
<protein>
    <recommendedName>
        <fullName evidence="1">Pyridoxal 5'-phosphate synthase subunit PdxT</fullName>
        <ecNumber evidence="1">4.3.3.6</ecNumber>
    </recommendedName>
    <alternativeName>
        <fullName evidence="1">Pdx2</fullName>
    </alternativeName>
    <alternativeName>
        <fullName evidence="1">Pyridoxal 5'-phosphate synthase glutaminase subunit</fullName>
        <ecNumber evidence="1">3.5.1.2</ecNumber>
    </alternativeName>
</protein>
<keyword id="KW-0315">Glutamine amidotransferase</keyword>
<keyword id="KW-0378">Hydrolase</keyword>
<keyword id="KW-0456">Lyase</keyword>
<keyword id="KW-0663">Pyridoxal phosphate</keyword>